<comment type="function">
    <text evidence="1">Thiol-specific peroxidase that catalyzes the reduction of hydrogen peroxide and organic hydroperoxides to water and alcohols, respectively. Plays a role in cell protection against oxidative stress by detoxifying peroxides and as sensor of hydrogen peroxide-mediated signaling events.</text>
</comment>
<comment type="catalytic activity">
    <reaction evidence="1">
        <text>a hydroperoxide + [thioredoxin]-dithiol = an alcohol + [thioredoxin]-disulfide + H2O</text>
        <dbReference type="Rhea" id="RHEA:62620"/>
        <dbReference type="Rhea" id="RHEA-COMP:10698"/>
        <dbReference type="Rhea" id="RHEA-COMP:10700"/>
        <dbReference type="ChEBI" id="CHEBI:15377"/>
        <dbReference type="ChEBI" id="CHEBI:29950"/>
        <dbReference type="ChEBI" id="CHEBI:30879"/>
        <dbReference type="ChEBI" id="CHEBI:35924"/>
        <dbReference type="ChEBI" id="CHEBI:50058"/>
        <dbReference type="EC" id="1.11.1.24"/>
    </reaction>
</comment>
<comment type="subunit">
    <text evidence="1">Homodimer; disulfide-linked, upon oxidation.</text>
</comment>
<comment type="miscellaneous">
    <text evidence="1">The active site is a conserved redox-active cysteine residue, the peroxidatic cysteine (C(P)), which makes the nucleophilic attack on the peroxide substrate. The peroxide oxidizes the C(P)-SH to cysteine sulfenic acid (C(P)-SOH), which then reacts with another cysteine residue, the resolving cysteine (C(R)), to form a disulfide bridge. The disulfide is subsequently reduced by an appropriate electron donor to complete the catalytic cycle. In this typical 2-Cys peroxiredoxin, C(R) is provided by the other dimeric subunit to form an intersubunit disulfide. The disulfide is subsequently reduced by thioredoxin.</text>
</comment>
<comment type="similarity">
    <text evidence="3">Belongs to the peroxiredoxin family. AhpC/Prx1 subfamily.</text>
</comment>
<evidence type="ECO:0000250" key="1">
    <source>
        <dbReference type="UniProtKB" id="Q06830"/>
    </source>
</evidence>
<evidence type="ECO:0000255" key="2">
    <source>
        <dbReference type="PROSITE-ProRule" id="PRU00691"/>
    </source>
</evidence>
<evidence type="ECO:0000305" key="3"/>
<name>TDX_ECHGR</name>
<organism>
    <name type="scientific">Echinococcus granulosus</name>
    <name type="common">Hydatid tapeworm</name>
    <dbReference type="NCBI Taxonomy" id="6210"/>
    <lineage>
        <taxon>Eukaryota</taxon>
        <taxon>Metazoa</taxon>
        <taxon>Spiralia</taxon>
        <taxon>Lophotrochozoa</taxon>
        <taxon>Platyhelminthes</taxon>
        <taxon>Cestoda</taxon>
        <taxon>Eucestoda</taxon>
        <taxon>Cyclophyllidea</taxon>
        <taxon>Taeniidae</taxon>
        <taxon>Echinococcus</taxon>
        <taxon>Echinococcus granulosus group</taxon>
    </lineage>
</organism>
<reference key="1">
    <citation type="submission" date="2002-01" db="EMBL/GenBank/DDBJ databases">
        <title>Serological studies on a full length cDNA clone of thioredoxin peroxidase from Echinococcus granulosus.</title>
        <authorList>
            <person name="Li J."/>
            <person name="Zhang W.-B."/>
            <person name="Zhang L.-H."/>
            <person name="McManus D.P."/>
        </authorList>
    </citation>
    <scope>NUCLEOTIDE SEQUENCE [MRNA]</scope>
</reference>
<reference key="2">
    <citation type="submission" date="1997-11" db="EMBL/GenBank/DDBJ databases">
        <authorList>
            <person name="Salinas G."/>
            <person name="Fernandez V."/>
            <person name="Fernandez C."/>
            <person name="Selkirk M.E."/>
        </authorList>
    </citation>
    <scope>NUCLEOTIDE SEQUENCE [MRNA] OF 9-193</scope>
</reference>
<accession>Q8T6C4</accession>
<accession>O96380</accession>
<proteinExistence type="evidence at transcript level"/>
<gene>
    <name type="primary">TPX</name>
</gene>
<protein>
    <recommendedName>
        <fullName>Thioredoxin peroxidase</fullName>
        <ecNumber evidence="1">1.11.1.24</ecNumber>
    </recommendedName>
    <alternativeName>
        <fullName>Peroxiredoxin</fullName>
    </alternativeName>
    <alternativeName>
        <fullName>TPx-Eg</fullName>
    </alternativeName>
    <alternativeName>
        <fullName>Thioredoxin-dependent peroxide reductase</fullName>
    </alternativeName>
    <alternativeName>
        <fullName evidence="3">Thioredoxin-dependent peroxiredoxin</fullName>
    </alternativeName>
</protein>
<sequence length="193" mass="21406">MAAVVGKLAPSFTCKALVDGELKDVSLSDYRGKYVILFFYPMDFTFVCPTEIIAFNDRADEFHQRGCQLLACSTDSGYCHLAWNNVSRKEGGVQGMRIPMLADTNHKISRDYGVLIEDQGIALRGLFIIDDKGVLRQITINDLPVGRSVDEALRLLDAFQFTDKHGEVCPANWQPGSKTFKPSAGDLKSFMSS</sequence>
<keyword id="KW-0049">Antioxidant</keyword>
<keyword id="KW-1015">Disulfide bond</keyword>
<keyword id="KW-0560">Oxidoreductase</keyword>
<keyword id="KW-0575">Peroxidase</keyword>
<keyword id="KW-0676">Redox-active center</keyword>
<feature type="chain" id="PRO_0000135091" description="Thioredoxin peroxidase">
    <location>
        <begin position="1"/>
        <end position="193"/>
    </location>
</feature>
<feature type="domain" description="Thioredoxin" evidence="2">
    <location>
        <begin position="3"/>
        <end position="161"/>
    </location>
</feature>
<feature type="active site" description="Cysteine sulfenic acid (-SOH) intermediate" evidence="1">
    <location>
        <position position="48"/>
    </location>
</feature>
<feature type="disulfide bond" description="Interchain (with C-169); in linked form" evidence="1">
    <location>
        <position position="48"/>
    </location>
</feature>
<feature type="disulfide bond" description="Interchain (with C-48); in linked form" evidence="1">
    <location>
        <position position="169"/>
    </location>
</feature>
<dbReference type="EC" id="1.11.1.24" evidence="1"/>
<dbReference type="EMBL" id="AF478688">
    <property type="protein sequence ID" value="AAL84833.1"/>
    <property type="molecule type" value="mRNA"/>
</dbReference>
<dbReference type="EMBL" id="AF034959">
    <property type="protein sequence ID" value="AAD02002.1"/>
    <property type="molecule type" value="mRNA"/>
</dbReference>
<dbReference type="SMR" id="Q8T6C4"/>
<dbReference type="EnsemblMetazoa" id="XM_024489458.1">
    <property type="protein sequence ID" value="XP_024356136.1"/>
    <property type="gene ID" value="GeneID_36335924"/>
</dbReference>
<dbReference type="WBParaSite" id="EgrG_000791700">
    <property type="protein sequence ID" value="EgrG_000791700"/>
    <property type="gene ID" value="EgrG_000791700"/>
</dbReference>
<dbReference type="OMA" id="FWYPKDF"/>
<dbReference type="OrthoDB" id="185659at2759"/>
<dbReference type="BRENDA" id="1.11.1.24">
    <property type="organism ID" value="2032"/>
</dbReference>
<dbReference type="Proteomes" id="UP000492820">
    <property type="component" value="Unassembled WGS sequence"/>
</dbReference>
<dbReference type="GO" id="GO:0005829">
    <property type="term" value="C:cytosol"/>
    <property type="evidence" value="ECO:0007669"/>
    <property type="project" value="TreeGrafter"/>
</dbReference>
<dbReference type="GO" id="GO:0008379">
    <property type="term" value="F:thioredoxin peroxidase activity"/>
    <property type="evidence" value="ECO:0007669"/>
    <property type="project" value="TreeGrafter"/>
</dbReference>
<dbReference type="GO" id="GO:0045454">
    <property type="term" value="P:cell redox homeostasis"/>
    <property type="evidence" value="ECO:0007669"/>
    <property type="project" value="TreeGrafter"/>
</dbReference>
<dbReference type="GO" id="GO:0033554">
    <property type="term" value="P:cellular response to stress"/>
    <property type="evidence" value="ECO:0007669"/>
    <property type="project" value="TreeGrafter"/>
</dbReference>
<dbReference type="GO" id="GO:0042744">
    <property type="term" value="P:hydrogen peroxide catabolic process"/>
    <property type="evidence" value="ECO:0007669"/>
    <property type="project" value="TreeGrafter"/>
</dbReference>
<dbReference type="GO" id="GO:0006979">
    <property type="term" value="P:response to oxidative stress"/>
    <property type="evidence" value="ECO:0007669"/>
    <property type="project" value="TreeGrafter"/>
</dbReference>
<dbReference type="CDD" id="cd03015">
    <property type="entry name" value="PRX_Typ2cys"/>
    <property type="match status" value="1"/>
</dbReference>
<dbReference type="FunFam" id="3.40.30.10:FF:000003">
    <property type="entry name" value="Peroxiredoxin 1"/>
    <property type="match status" value="1"/>
</dbReference>
<dbReference type="Gene3D" id="3.40.30.10">
    <property type="entry name" value="Glutaredoxin"/>
    <property type="match status" value="1"/>
</dbReference>
<dbReference type="InterPro" id="IPR000866">
    <property type="entry name" value="AhpC/TSA"/>
</dbReference>
<dbReference type="InterPro" id="IPR050217">
    <property type="entry name" value="Peroxiredoxin"/>
</dbReference>
<dbReference type="InterPro" id="IPR024706">
    <property type="entry name" value="Peroxiredoxin_AhpC-typ"/>
</dbReference>
<dbReference type="InterPro" id="IPR019479">
    <property type="entry name" value="Peroxiredoxin_C"/>
</dbReference>
<dbReference type="InterPro" id="IPR036249">
    <property type="entry name" value="Thioredoxin-like_sf"/>
</dbReference>
<dbReference type="InterPro" id="IPR013766">
    <property type="entry name" value="Thioredoxin_domain"/>
</dbReference>
<dbReference type="PANTHER" id="PTHR10681:SF163">
    <property type="entry name" value="AT16346P-RELATED"/>
    <property type="match status" value="1"/>
</dbReference>
<dbReference type="PANTHER" id="PTHR10681">
    <property type="entry name" value="THIOREDOXIN PEROXIDASE"/>
    <property type="match status" value="1"/>
</dbReference>
<dbReference type="Pfam" id="PF10417">
    <property type="entry name" value="1-cysPrx_C"/>
    <property type="match status" value="1"/>
</dbReference>
<dbReference type="Pfam" id="PF00578">
    <property type="entry name" value="AhpC-TSA"/>
    <property type="match status" value="1"/>
</dbReference>
<dbReference type="PIRSF" id="PIRSF000239">
    <property type="entry name" value="AHPC"/>
    <property type="match status" value="1"/>
</dbReference>
<dbReference type="SUPFAM" id="SSF52833">
    <property type="entry name" value="Thioredoxin-like"/>
    <property type="match status" value="1"/>
</dbReference>
<dbReference type="PROSITE" id="PS51352">
    <property type="entry name" value="THIOREDOXIN_2"/>
    <property type="match status" value="1"/>
</dbReference>